<accession>B0T1S9</accession>
<reference key="1">
    <citation type="submission" date="2008-01" db="EMBL/GenBank/DDBJ databases">
        <title>Complete sequence of chromosome of Caulobacter sp. K31.</title>
        <authorList>
            <consortium name="US DOE Joint Genome Institute"/>
            <person name="Copeland A."/>
            <person name="Lucas S."/>
            <person name="Lapidus A."/>
            <person name="Barry K."/>
            <person name="Glavina del Rio T."/>
            <person name="Dalin E."/>
            <person name="Tice H."/>
            <person name="Pitluck S."/>
            <person name="Bruce D."/>
            <person name="Goodwin L."/>
            <person name="Thompson L.S."/>
            <person name="Brettin T."/>
            <person name="Detter J.C."/>
            <person name="Han C."/>
            <person name="Schmutz J."/>
            <person name="Larimer F."/>
            <person name="Land M."/>
            <person name="Hauser L."/>
            <person name="Kyrpides N."/>
            <person name="Kim E."/>
            <person name="Stephens C."/>
            <person name="Richardson P."/>
        </authorList>
    </citation>
    <scope>NUCLEOTIDE SEQUENCE [LARGE SCALE GENOMIC DNA]</scope>
    <source>
        <strain>K31</strain>
    </source>
</reference>
<dbReference type="EC" id="3.5.1.88" evidence="1"/>
<dbReference type="EMBL" id="CP000927">
    <property type="protein sequence ID" value="ABZ73690.1"/>
    <property type="molecule type" value="Genomic_DNA"/>
</dbReference>
<dbReference type="SMR" id="B0T1S9"/>
<dbReference type="STRING" id="366602.Caul_4570"/>
<dbReference type="KEGG" id="cak:Caul_4570"/>
<dbReference type="eggNOG" id="COG0242">
    <property type="taxonomic scope" value="Bacteria"/>
</dbReference>
<dbReference type="HOGENOM" id="CLU_061901_2_0_5"/>
<dbReference type="OrthoDB" id="9804313at2"/>
<dbReference type="GO" id="GO:0046872">
    <property type="term" value="F:metal ion binding"/>
    <property type="evidence" value="ECO:0007669"/>
    <property type="project" value="UniProtKB-KW"/>
</dbReference>
<dbReference type="GO" id="GO:0042586">
    <property type="term" value="F:peptide deformylase activity"/>
    <property type="evidence" value="ECO:0007669"/>
    <property type="project" value="UniProtKB-UniRule"/>
</dbReference>
<dbReference type="GO" id="GO:0043686">
    <property type="term" value="P:co-translational protein modification"/>
    <property type="evidence" value="ECO:0007669"/>
    <property type="project" value="TreeGrafter"/>
</dbReference>
<dbReference type="GO" id="GO:0006412">
    <property type="term" value="P:translation"/>
    <property type="evidence" value="ECO:0007669"/>
    <property type="project" value="UniProtKB-UniRule"/>
</dbReference>
<dbReference type="CDD" id="cd00487">
    <property type="entry name" value="Pep_deformylase"/>
    <property type="match status" value="1"/>
</dbReference>
<dbReference type="Gene3D" id="3.90.45.10">
    <property type="entry name" value="Peptide deformylase"/>
    <property type="match status" value="1"/>
</dbReference>
<dbReference type="HAMAP" id="MF_00163">
    <property type="entry name" value="Pep_deformylase"/>
    <property type="match status" value="1"/>
</dbReference>
<dbReference type="InterPro" id="IPR023635">
    <property type="entry name" value="Peptide_deformylase"/>
</dbReference>
<dbReference type="InterPro" id="IPR036821">
    <property type="entry name" value="Peptide_deformylase_sf"/>
</dbReference>
<dbReference type="NCBIfam" id="TIGR00079">
    <property type="entry name" value="pept_deformyl"/>
    <property type="match status" value="1"/>
</dbReference>
<dbReference type="NCBIfam" id="NF001159">
    <property type="entry name" value="PRK00150.1-3"/>
    <property type="match status" value="1"/>
</dbReference>
<dbReference type="PANTHER" id="PTHR10458">
    <property type="entry name" value="PEPTIDE DEFORMYLASE"/>
    <property type="match status" value="1"/>
</dbReference>
<dbReference type="PANTHER" id="PTHR10458:SF22">
    <property type="entry name" value="PEPTIDE DEFORMYLASE"/>
    <property type="match status" value="1"/>
</dbReference>
<dbReference type="Pfam" id="PF01327">
    <property type="entry name" value="Pep_deformylase"/>
    <property type="match status" value="1"/>
</dbReference>
<dbReference type="PIRSF" id="PIRSF004749">
    <property type="entry name" value="Pep_def"/>
    <property type="match status" value="1"/>
</dbReference>
<dbReference type="PRINTS" id="PR01576">
    <property type="entry name" value="PDEFORMYLASE"/>
</dbReference>
<dbReference type="SUPFAM" id="SSF56420">
    <property type="entry name" value="Peptide deformylase"/>
    <property type="match status" value="1"/>
</dbReference>
<comment type="function">
    <text evidence="1">Removes the formyl group from the N-terminal Met of newly synthesized proteins. Requires at least a dipeptide for an efficient rate of reaction. N-terminal L-methionine is a prerequisite for activity but the enzyme has broad specificity at other positions.</text>
</comment>
<comment type="catalytic activity">
    <reaction evidence="1">
        <text>N-terminal N-formyl-L-methionyl-[peptide] + H2O = N-terminal L-methionyl-[peptide] + formate</text>
        <dbReference type="Rhea" id="RHEA:24420"/>
        <dbReference type="Rhea" id="RHEA-COMP:10639"/>
        <dbReference type="Rhea" id="RHEA-COMP:10640"/>
        <dbReference type="ChEBI" id="CHEBI:15377"/>
        <dbReference type="ChEBI" id="CHEBI:15740"/>
        <dbReference type="ChEBI" id="CHEBI:49298"/>
        <dbReference type="ChEBI" id="CHEBI:64731"/>
        <dbReference type="EC" id="3.5.1.88"/>
    </reaction>
</comment>
<comment type="cofactor">
    <cofactor evidence="1">
        <name>Fe(2+)</name>
        <dbReference type="ChEBI" id="CHEBI:29033"/>
    </cofactor>
    <text evidence="1">Binds 1 Fe(2+) ion.</text>
</comment>
<comment type="similarity">
    <text evidence="1">Belongs to the polypeptide deformylase family.</text>
</comment>
<name>DEF_CAUSK</name>
<proteinExistence type="inferred from homology"/>
<evidence type="ECO:0000255" key="1">
    <source>
        <dbReference type="HAMAP-Rule" id="MF_00163"/>
    </source>
</evidence>
<keyword id="KW-0378">Hydrolase</keyword>
<keyword id="KW-0408">Iron</keyword>
<keyword id="KW-0479">Metal-binding</keyword>
<keyword id="KW-0648">Protein biosynthesis</keyword>
<feature type="chain" id="PRO_1000076940" description="Peptide deformylase">
    <location>
        <begin position="1"/>
        <end position="173"/>
    </location>
</feature>
<feature type="active site" evidence="1">
    <location>
        <position position="141"/>
    </location>
</feature>
<feature type="binding site" evidence="1">
    <location>
        <position position="98"/>
    </location>
    <ligand>
        <name>Fe cation</name>
        <dbReference type="ChEBI" id="CHEBI:24875"/>
    </ligand>
</feature>
<feature type="binding site" evidence="1">
    <location>
        <position position="140"/>
    </location>
    <ligand>
        <name>Fe cation</name>
        <dbReference type="ChEBI" id="CHEBI:24875"/>
    </ligand>
</feature>
<feature type="binding site" evidence="1">
    <location>
        <position position="144"/>
    </location>
    <ligand>
        <name>Fe cation</name>
        <dbReference type="ChEBI" id="CHEBI:24875"/>
    </ligand>
</feature>
<gene>
    <name evidence="1" type="primary">def</name>
    <name type="ordered locus">Caul_4570</name>
</gene>
<sequence length="173" mass="19361">MAIRRILTVDNAADLAVLKQVSKDVPAVDDALRGLMDDMLETMYDAPGIGLAAVQVGELVNVIVMDLAREGEEPAPRYFVNPKITWASEELFEYEEGCLSVPEVYDAVERPAKVKISYLNYQGEAVEEDAEELFAVCIQHEMDHLKGVLFIDHLSRLKRDRAISKVKKARRAA</sequence>
<protein>
    <recommendedName>
        <fullName evidence="1">Peptide deformylase</fullName>
        <shortName evidence="1">PDF</shortName>
        <ecNumber evidence="1">3.5.1.88</ecNumber>
    </recommendedName>
    <alternativeName>
        <fullName evidence="1">Polypeptide deformylase</fullName>
    </alternativeName>
</protein>
<organism>
    <name type="scientific">Caulobacter sp. (strain K31)</name>
    <dbReference type="NCBI Taxonomy" id="366602"/>
    <lineage>
        <taxon>Bacteria</taxon>
        <taxon>Pseudomonadati</taxon>
        <taxon>Pseudomonadota</taxon>
        <taxon>Alphaproteobacteria</taxon>
        <taxon>Caulobacterales</taxon>
        <taxon>Caulobacteraceae</taxon>
        <taxon>Caulobacter</taxon>
    </lineage>
</organism>